<accession>P77799</accession>
<name>LHA2_RUBGE</name>
<reference key="1">
    <citation type="journal article" date="1994" name="Eur. J. Biochem.">
        <title>Structural and spectral characterisation of the antenna complexes of Rhodocyclus gelatinosus. Indications of a hairpin-like-arranged antenna apoprotein with an unusually high alanine content.</title>
        <authorList>
            <person name="Brunisholz R.A."/>
            <person name="Suter F."/>
            <person name="Zuber H."/>
        </authorList>
    </citation>
    <scope>PROTEIN SEQUENCE</scope>
    <scope>SUBUNIT STRUCTURE</scope>
    <source>
        <strain>DSM 149 / LMG 4308 / 2150</strain>
        <strain>DSM 151 / LMG 4306 / Dr 2</strain>
    </source>
</reference>
<reference key="2">
    <citation type="submission" date="1996-08" db="EMBL/GenBank/DDBJ databases">
        <authorList>
            <person name="Simmons A.E."/>
        </authorList>
    </citation>
    <scope>NUCLEOTIDE SEQUENCE [GENOMIC DNA]</scope>
    <source>
        <strain>DSM 149 / LMG 4308 / 2150</strain>
        <strain>DSM 151 / LMG 4306 / Dr 2</strain>
    </source>
</reference>
<reference key="3">
    <citation type="journal article" date="2000" name="Photosyn. Res.">
        <title>Cloning, sequencing and analysis of the pucC gene from Rubrivivax gelatinosus strain 151 and Rhodopseudomonas acidophila strain 10050.</title>
        <authorList>
            <person name="Simmons A.E."/>
            <person name="Barrett S.J."/>
            <person name="Hunter C.N."/>
            <person name="Cogdell R.J."/>
        </authorList>
    </citation>
    <scope>NUCLEOTIDE SEQUENCE [GENOMIC DNA]</scope>
    <source>
        <strain>DSM 151 / LMG 4306 / Dr 2</strain>
    </source>
</reference>
<feature type="chain" id="PRO_0000099793" description="Light-harvesting protein B-800/850 alpha chain">
    <location>
        <begin position="1"/>
        <end position="71"/>
    </location>
</feature>
<feature type="topological domain" description="Cytoplasmic" evidence="2">
    <location>
        <begin position="1"/>
        <end position="15"/>
    </location>
</feature>
<feature type="transmembrane region" description="Helical" evidence="2">
    <location>
        <begin position="16"/>
        <end position="36"/>
    </location>
</feature>
<feature type="topological domain" description="Periplasmic" evidence="2">
    <location>
        <begin position="37"/>
        <end position="50"/>
    </location>
</feature>
<feature type="transmembrane region" description="Helical" evidence="2">
    <location>
        <begin position="51"/>
        <end position="71"/>
    </location>
</feature>
<feature type="binding site" description="axial binding residue" evidence="2">
    <location>
        <position position="31"/>
    </location>
    <ligand>
        <name>a bacteriochlorophyll</name>
        <dbReference type="ChEBI" id="CHEBI:38201"/>
    </ligand>
    <ligandPart>
        <name>Mg</name>
        <dbReference type="ChEBI" id="CHEBI:25107"/>
    </ligandPart>
</feature>
<proteinExistence type="evidence at protein level"/>
<keyword id="KW-0042">Antenna complex</keyword>
<keyword id="KW-0076">Bacteriochlorophyll</keyword>
<keyword id="KW-1003">Cell membrane</keyword>
<keyword id="KW-0148">Chlorophyll</keyword>
<keyword id="KW-0157">Chromophore</keyword>
<keyword id="KW-0903">Direct protein sequencing</keyword>
<keyword id="KW-0437">Light-harvesting polypeptide</keyword>
<keyword id="KW-0460">Magnesium</keyword>
<keyword id="KW-0472">Membrane</keyword>
<keyword id="KW-0479">Metal-binding</keyword>
<keyword id="KW-0812">Transmembrane</keyword>
<keyword id="KW-1133">Transmembrane helix</keyword>
<dbReference type="EMBL" id="U67155">
    <property type="protein sequence ID" value="AAB49634.1"/>
    <property type="molecule type" value="Genomic_DNA"/>
</dbReference>
<dbReference type="EMBL" id="U67154">
    <property type="protein sequence ID" value="AAB49631.1"/>
    <property type="molecule type" value="Genomic_DNA"/>
</dbReference>
<dbReference type="EMBL" id="AJ245615">
    <property type="protein sequence ID" value="CAB52411.1"/>
    <property type="molecule type" value="Genomic_DNA"/>
</dbReference>
<dbReference type="PIR" id="S45608">
    <property type="entry name" value="S45608"/>
</dbReference>
<dbReference type="RefSeq" id="WP_132645140.1">
    <property type="nucleotide sequence ID" value="NZ_CP181386.1"/>
</dbReference>
<dbReference type="SMR" id="P77799"/>
<dbReference type="GeneID" id="98607908"/>
<dbReference type="OrthoDB" id="9156281at2"/>
<dbReference type="GO" id="GO:0005886">
    <property type="term" value="C:plasma membrane"/>
    <property type="evidence" value="ECO:0007669"/>
    <property type="project" value="UniProtKB-SubCell"/>
</dbReference>
<dbReference type="GO" id="GO:0030077">
    <property type="term" value="C:plasma membrane light-harvesting complex"/>
    <property type="evidence" value="ECO:0007669"/>
    <property type="project" value="InterPro"/>
</dbReference>
<dbReference type="GO" id="GO:0042314">
    <property type="term" value="F:bacteriochlorophyll binding"/>
    <property type="evidence" value="ECO:0007669"/>
    <property type="project" value="UniProtKB-KW"/>
</dbReference>
<dbReference type="GO" id="GO:0045156">
    <property type="term" value="F:electron transporter, transferring electrons within the cyclic electron transport pathway of photosynthesis activity"/>
    <property type="evidence" value="ECO:0007669"/>
    <property type="project" value="InterPro"/>
</dbReference>
<dbReference type="GO" id="GO:0046872">
    <property type="term" value="F:metal ion binding"/>
    <property type="evidence" value="ECO:0007669"/>
    <property type="project" value="UniProtKB-KW"/>
</dbReference>
<dbReference type="GO" id="GO:0019684">
    <property type="term" value="P:photosynthesis, light reaction"/>
    <property type="evidence" value="ECO:0007669"/>
    <property type="project" value="InterPro"/>
</dbReference>
<dbReference type="Gene3D" id="4.10.220.20">
    <property type="entry name" value="Light-harvesting complex"/>
    <property type="match status" value="1"/>
</dbReference>
<dbReference type="InterPro" id="IPR000066">
    <property type="entry name" value="Antenna_a/b"/>
</dbReference>
<dbReference type="InterPro" id="IPR018332">
    <property type="entry name" value="Antenna_alpha"/>
</dbReference>
<dbReference type="InterPro" id="IPR035889">
    <property type="entry name" value="Light-harvesting_complex"/>
</dbReference>
<dbReference type="Pfam" id="PF00556">
    <property type="entry name" value="LHC"/>
    <property type="match status" value="1"/>
</dbReference>
<dbReference type="PRINTS" id="PR00673">
    <property type="entry name" value="LIGHTHARVSTA"/>
</dbReference>
<dbReference type="SUPFAM" id="SSF56918">
    <property type="entry name" value="Light-harvesting complex subunits"/>
    <property type="match status" value="1"/>
</dbReference>
<sequence length="71" mass="7135">MNQGKVWRVVKPTVGVPVYLGAVAVTALILHGGLLAKTDWFGAYWNGGKKAAAAAAAVAPAPVAAPQAPAQ</sequence>
<comment type="function">
    <text>Antenna complexes are light-harvesting systems, which transfer the excitation energy to the reaction centers.</text>
</comment>
<comment type="subunit">
    <text evidence="1">An alpha/beta heterodimer conjugated to 3 bacteriochlorophyll molecules. The core complex is formed by different alpha and beta chains, binding bacteriochlorophyll molecules, and arranged most probably in tetrameric structures disposed around the reaction center. The non-pigmented gamma chains may constitute additional components (By similarity).</text>
</comment>
<comment type="subcellular location">
    <subcellularLocation>
        <location>Cell membrane</location>
        <topology>Multi-pass membrane protein</topology>
    </subcellularLocation>
</comment>
<comment type="miscellaneous">
    <text evidence="4">An active antenna complex lacking the last 16 residues has also been isolated from DSM 149.</text>
</comment>
<comment type="similarity">
    <text evidence="3">Belongs to the antenna complex alpha subunit family.</text>
</comment>
<protein>
    <recommendedName>
        <fullName>Light-harvesting protein B-800/850 alpha chain</fullName>
    </recommendedName>
    <alternativeName>
        <fullName>Antenna pigment protein alpha chain</fullName>
    </alternativeName>
    <alternativeName>
        <fullName>LH2 alpha polypeptide</fullName>
    </alternativeName>
</protein>
<gene>
    <name type="primary">pucA</name>
</gene>
<evidence type="ECO:0000250" key="1"/>
<evidence type="ECO:0000255" key="2"/>
<evidence type="ECO:0000305" key="3"/>
<evidence type="ECO:0000305" key="4">
    <source>
    </source>
</evidence>
<organism>
    <name type="scientific">Rubrivivax gelatinosus</name>
    <name type="common">Rhodocyclus gelatinosus</name>
    <name type="synonym">Rhodopseudomonas gelatinosa</name>
    <dbReference type="NCBI Taxonomy" id="28068"/>
    <lineage>
        <taxon>Bacteria</taxon>
        <taxon>Pseudomonadati</taxon>
        <taxon>Pseudomonadota</taxon>
        <taxon>Betaproteobacteria</taxon>
        <taxon>Burkholderiales</taxon>
        <taxon>Sphaerotilaceae</taxon>
        <taxon>Rubrivivax</taxon>
    </lineage>
</organism>